<gene>
    <name type="primary">Yap1</name>
    <name type="synonym">Yap</name>
    <name type="synonym">Yap65</name>
</gene>
<dbReference type="EMBL" id="X80508">
    <property type="protein sequence ID" value="CAA56673.1"/>
    <property type="molecule type" value="mRNA"/>
</dbReference>
<dbReference type="EMBL" id="CH466522">
    <property type="protein sequence ID" value="EDL24950.1"/>
    <property type="molecule type" value="Genomic_DNA"/>
</dbReference>
<dbReference type="EMBL" id="BC014733">
    <property type="protein sequence ID" value="AAH14733.1"/>
    <property type="molecule type" value="mRNA"/>
</dbReference>
<dbReference type="EMBL" id="BC039125">
    <property type="protein sequence ID" value="AAH39125.1"/>
    <property type="molecule type" value="mRNA"/>
</dbReference>
<dbReference type="EMBL" id="BC094313">
    <property type="protein sequence ID" value="AAH94313.1"/>
    <property type="molecule type" value="mRNA"/>
</dbReference>
<dbReference type="CCDS" id="CCDS40533.1">
    <molecule id="P46938-2"/>
</dbReference>
<dbReference type="CCDS" id="CCDS52718.1">
    <molecule id="P46938-1"/>
</dbReference>
<dbReference type="PIR" id="B56954">
    <property type="entry name" value="B56954"/>
</dbReference>
<dbReference type="RefSeq" id="NP_001164618.1">
    <molecule id="P46938-1"/>
    <property type="nucleotide sequence ID" value="NM_001171147.1"/>
</dbReference>
<dbReference type="RefSeq" id="NP_033560.1">
    <molecule id="P46938-2"/>
    <property type="nucleotide sequence ID" value="NM_009534.3"/>
</dbReference>
<dbReference type="PDB" id="3JUA">
    <property type="method" value="X-ray"/>
    <property type="resolution" value="3.00 A"/>
    <property type="chains" value="B/D/F/H=47-85"/>
</dbReference>
<dbReference type="PDB" id="6JK0">
    <property type="method" value="X-ray"/>
    <property type="resolution" value="3.10 A"/>
    <property type="chains" value="A=156-247"/>
</dbReference>
<dbReference type="PDB" id="6JK1">
    <property type="method" value="X-ray"/>
    <property type="resolution" value="2.00 A"/>
    <property type="chains" value="A/B=156-247"/>
</dbReference>
<dbReference type="PDBsum" id="3JUA"/>
<dbReference type="PDBsum" id="6JK0"/>
<dbReference type="PDBsum" id="6JK1"/>
<dbReference type="SMR" id="P46938"/>
<dbReference type="BioGRID" id="204611">
    <property type="interactions" value="97"/>
</dbReference>
<dbReference type="ComplexPortal" id="CPX-394">
    <property type="entry name" value="YAP1-TEAD1 transcription factor complex"/>
</dbReference>
<dbReference type="CORUM" id="P46938"/>
<dbReference type="DIP" id="DIP-40015N"/>
<dbReference type="ELM" id="P46938"/>
<dbReference type="FunCoup" id="P46938">
    <property type="interactions" value="2270"/>
</dbReference>
<dbReference type="IntAct" id="P46938">
    <property type="interactions" value="36"/>
</dbReference>
<dbReference type="MINT" id="P46938"/>
<dbReference type="STRING" id="10090.ENSMUSP00000069554"/>
<dbReference type="GlyGen" id="P46938">
    <property type="glycosylation" value="3 sites, 1 O-linked glycan (2 sites)"/>
</dbReference>
<dbReference type="iPTMnet" id="P46938"/>
<dbReference type="PhosphoSitePlus" id="P46938"/>
<dbReference type="jPOST" id="P46938"/>
<dbReference type="PaxDb" id="10090-ENSMUSP00000069554"/>
<dbReference type="PeptideAtlas" id="P46938"/>
<dbReference type="ProteomicsDB" id="299617">
    <molecule id="P46938-1"/>
</dbReference>
<dbReference type="ProteomicsDB" id="299618">
    <molecule id="P46938-2"/>
</dbReference>
<dbReference type="Pumba" id="P46938"/>
<dbReference type="Antibodypedia" id="3994">
    <property type="antibodies" value="997 antibodies from 44 providers"/>
</dbReference>
<dbReference type="CPTC" id="P46938">
    <property type="antibodies" value="4 antibodies"/>
</dbReference>
<dbReference type="DNASU" id="22601"/>
<dbReference type="Ensembl" id="ENSMUST00000065353.13">
    <molecule id="P46938-1"/>
    <property type="protein sequence ID" value="ENSMUSP00000069554.7"/>
    <property type="gene ID" value="ENSMUSG00000053110.14"/>
</dbReference>
<dbReference type="Ensembl" id="ENSMUST00000086580.12">
    <molecule id="P46938-2"/>
    <property type="protein sequence ID" value="ENSMUSP00000083772.6"/>
    <property type="gene ID" value="ENSMUSG00000053110.14"/>
</dbReference>
<dbReference type="GeneID" id="22601"/>
<dbReference type="KEGG" id="mmu:22601"/>
<dbReference type="UCSC" id="uc009ode.2">
    <molecule id="P46938-2"/>
    <property type="organism name" value="mouse"/>
</dbReference>
<dbReference type="UCSC" id="uc009odf.2">
    <molecule id="P46938-1"/>
    <property type="organism name" value="mouse"/>
</dbReference>
<dbReference type="AGR" id="MGI:103262"/>
<dbReference type="CTD" id="10413"/>
<dbReference type="MGI" id="MGI:103262">
    <property type="gene designation" value="Yap1"/>
</dbReference>
<dbReference type="VEuPathDB" id="HostDB:ENSMUSG00000053110"/>
<dbReference type="eggNOG" id="KOG0940">
    <property type="taxonomic scope" value="Eukaryota"/>
</dbReference>
<dbReference type="GeneTree" id="ENSGT00510000046760"/>
<dbReference type="HOGENOM" id="CLU_041917_0_1_1"/>
<dbReference type="InParanoid" id="P46938"/>
<dbReference type="OMA" id="IIHPRAN"/>
<dbReference type="OrthoDB" id="3045089at2759"/>
<dbReference type="PhylomeDB" id="P46938"/>
<dbReference type="TreeFam" id="TF326941"/>
<dbReference type="Reactome" id="R-MMU-1251985">
    <property type="pathway name" value="Nuclear signaling by ERBB4"/>
</dbReference>
<dbReference type="Reactome" id="R-MMU-2028269">
    <property type="pathway name" value="Signaling by Hippo"/>
</dbReference>
<dbReference type="Reactome" id="R-MMU-2032785">
    <property type="pathway name" value="YAP1- and WWTR1 (TAZ)-stimulated gene expression"/>
</dbReference>
<dbReference type="Reactome" id="R-MMU-8939236">
    <property type="pathway name" value="RUNX1 regulates transcription of genes involved in differentiation of HSCs"/>
</dbReference>
<dbReference type="Reactome" id="R-MMU-8951671">
    <property type="pathway name" value="RUNX3 regulates YAP1-mediated transcription"/>
</dbReference>
<dbReference type="Reactome" id="R-MMU-9860927">
    <property type="pathway name" value="Turbulent (oscillatory, disturbed) flow shear stress activates signaling by PIEZO1 and integrins in endothelial cells"/>
</dbReference>
<dbReference type="BioGRID-ORCS" id="22601">
    <property type="hits" value="13 hits in 75 CRISPR screens"/>
</dbReference>
<dbReference type="ChiTaRS" id="Yap1">
    <property type="organism name" value="mouse"/>
</dbReference>
<dbReference type="EvolutionaryTrace" id="P46938"/>
<dbReference type="PRO" id="PR:P46938"/>
<dbReference type="Proteomes" id="UP000000589">
    <property type="component" value="Chromosome 9"/>
</dbReference>
<dbReference type="RNAct" id="P46938">
    <property type="molecule type" value="protein"/>
</dbReference>
<dbReference type="Bgee" id="ENSMUSG00000053110">
    <property type="expression patterns" value="Expressed in animal zygote and 255 other cell types or tissues"/>
</dbReference>
<dbReference type="ExpressionAtlas" id="P46938">
    <property type="expression patterns" value="baseline and differential"/>
</dbReference>
<dbReference type="GO" id="GO:0005923">
    <property type="term" value="C:bicellular tight junction"/>
    <property type="evidence" value="ECO:0007669"/>
    <property type="project" value="UniProtKB-SubCell"/>
</dbReference>
<dbReference type="GO" id="GO:0005911">
    <property type="term" value="C:cell-cell junction"/>
    <property type="evidence" value="ECO:0000314"/>
    <property type="project" value="UniProtKB"/>
</dbReference>
<dbReference type="GO" id="GO:0005737">
    <property type="term" value="C:cytoplasm"/>
    <property type="evidence" value="ECO:0000314"/>
    <property type="project" value="UniProtKB"/>
</dbReference>
<dbReference type="GO" id="GO:0005829">
    <property type="term" value="C:cytosol"/>
    <property type="evidence" value="ECO:0000314"/>
    <property type="project" value="MGI"/>
</dbReference>
<dbReference type="GO" id="GO:0001674">
    <property type="term" value="C:female germ cell nucleus"/>
    <property type="evidence" value="ECO:0000314"/>
    <property type="project" value="MGI"/>
</dbReference>
<dbReference type="GO" id="GO:0016020">
    <property type="term" value="C:membrane"/>
    <property type="evidence" value="ECO:0000314"/>
    <property type="project" value="MGI"/>
</dbReference>
<dbReference type="GO" id="GO:0005739">
    <property type="term" value="C:mitochondrion"/>
    <property type="evidence" value="ECO:0007669"/>
    <property type="project" value="Ensembl"/>
</dbReference>
<dbReference type="GO" id="GO:0005654">
    <property type="term" value="C:nucleoplasm"/>
    <property type="evidence" value="ECO:0000304"/>
    <property type="project" value="Reactome"/>
</dbReference>
<dbReference type="GO" id="GO:0005634">
    <property type="term" value="C:nucleus"/>
    <property type="evidence" value="ECO:0000314"/>
    <property type="project" value="UniProtKB"/>
</dbReference>
<dbReference type="GO" id="GO:0005886">
    <property type="term" value="C:plasma membrane"/>
    <property type="evidence" value="ECO:0007669"/>
    <property type="project" value="UniProtKB-SubCell"/>
</dbReference>
<dbReference type="GO" id="GO:0140552">
    <property type="term" value="C:TEAD-YAP complex"/>
    <property type="evidence" value="ECO:0000353"/>
    <property type="project" value="ComplexPortal"/>
</dbReference>
<dbReference type="GO" id="GO:0005667">
    <property type="term" value="C:transcription regulator complex"/>
    <property type="evidence" value="ECO:0000316"/>
    <property type="project" value="MGI"/>
</dbReference>
<dbReference type="GO" id="GO:0003682">
    <property type="term" value="F:chromatin binding"/>
    <property type="evidence" value="ECO:0000314"/>
    <property type="project" value="MGI"/>
</dbReference>
<dbReference type="GO" id="GO:0140297">
    <property type="term" value="F:DNA-binding transcription factor binding"/>
    <property type="evidence" value="ECO:0007669"/>
    <property type="project" value="Ensembl"/>
</dbReference>
<dbReference type="GO" id="GO:0070064">
    <property type="term" value="F:proline-rich region binding"/>
    <property type="evidence" value="ECO:0000353"/>
    <property type="project" value="MGI"/>
</dbReference>
<dbReference type="GO" id="GO:0000978">
    <property type="term" value="F:RNA polymerase II cis-regulatory region sequence-specific DNA binding"/>
    <property type="evidence" value="ECO:0000314"/>
    <property type="project" value="MGI"/>
</dbReference>
<dbReference type="GO" id="GO:0000976">
    <property type="term" value="F:transcription cis-regulatory region binding"/>
    <property type="evidence" value="ECO:0000250"/>
    <property type="project" value="UniProtKB"/>
</dbReference>
<dbReference type="GO" id="GO:0003713">
    <property type="term" value="F:transcription coactivator activity"/>
    <property type="evidence" value="ECO:0000314"/>
    <property type="project" value="UniProtKB"/>
</dbReference>
<dbReference type="GO" id="GO:0003714">
    <property type="term" value="F:transcription corepressor activity"/>
    <property type="evidence" value="ECO:0007669"/>
    <property type="project" value="Ensembl"/>
</dbReference>
<dbReference type="GO" id="GO:0001824">
    <property type="term" value="P:blastocyst development"/>
    <property type="evidence" value="ECO:0000315"/>
    <property type="project" value="MGI"/>
</dbReference>
<dbReference type="GO" id="GO:0060449">
    <property type="term" value="P:bud elongation involved in lung branching"/>
    <property type="evidence" value="ECO:0000315"/>
    <property type="project" value="MGI"/>
</dbReference>
<dbReference type="GO" id="GO:0060070">
    <property type="term" value="P:canonical Wnt signaling pathway"/>
    <property type="evidence" value="ECO:0000314"/>
    <property type="project" value="MGI"/>
</dbReference>
<dbReference type="GO" id="GO:0061026">
    <property type="term" value="P:cardiac muscle tissue regeneration"/>
    <property type="evidence" value="ECO:0000315"/>
    <property type="project" value="ARUK-UCL"/>
</dbReference>
<dbReference type="GO" id="GO:0000902">
    <property type="term" value="P:cell morphogenesis"/>
    <property type="evidence" value="ECO:0000315"/>
    <property type="project" value="MGI"/>
</dbReference>
<dbReference type="GO" id="GO:0008283">
    <property type="term" value="P:cell population proliferation"/>
    <property type="evidence" value="ECO:0000314"/>
    <property type="project" value="MGI"/>
</dbReference>
<dbReference type="GO" id="GO:0071480">
    <property type="term" value="P:cellular response to gamma radiation"/>
    <property type="evidence" value="ECO:0000250"/>
    <property type="project" value="UniProtKB"/>
</dbReference>
<dbReference type="GO" id="GO:0071300">
    <property type="term" value="P:cellular response to retinoic acid"/>
    <property type="evidence" value="ECO:0000314"/>
    <property type="project" value="MGI"/>
</dbReference>
<dbReference type="GO" id="GO:0003143">
    <property type="term" value="P:embryonic heart tube morphogenesis"/>
    <property type="evidence" value="ECO:0000316"/>
    <property type="project" value="MGI"/>
</dbReference>
<dbReference type="GO" id="GO:1903703">
    <property type="term" value="P:enterocyte differentiation"/>
    <property type="evidence" value="ECO:0000314"/>
    <property type="project" value="MGI"/>
</dbReference>
<dbReference type="GO" id="GO:0030855">
    <property type="term" value="P:epithelial cell differentiation"/>
    <property type="evidence" value="ECO:0000314"/>
    <property type="project" value="MGI"/>
</dbReference>
<dbReference type="GO" id="GO:0050673">
    <property type="term" value="P:epithelial cell proliferation"/>
    <property type="evidence" value="ECO:0000314"/>
    <property type="project" value="MGI"/>
</dbReference>
<dbReference type="GO" id="GO:0097191">
    <property type="term" value="P:extrinsic apoptotic signaling pathway"/>
    <property type="evidence" value="ECO:0000316"/>
    <property type="project" value="MGI"/>
</dbReference>
<dbReference type="GO" id="GO:0002067">
    <property type="term" value="P:glandular epithelial cell differentiation"/>
    <property type="evidence" value="ECO:0000314"/>
    <property type="project" value="MGI"/>
</dbReference>
<dbReference type="GO" id="GO:0003015">
    <property type="term" value="P:heart process"/>
    <property type="evidence" value="ECO:0000315"/>
    <property type="project" value="ARUK-UCL"/>
</dbReference>
<dbReference type="GO" id="GO:0035329">
    <property type="term" value="P:hippo signaling"/>
    <property type="evidence" value="ECO:0000316"/>
    <property type="project" value="MGI"/>
</dbReference>
<dbReference type="GO" id="GO:0070102">
    <property type="term" value="P:interleukin-6-mediated signaling pathway"/>
    <property type="evidence" value="ECO:0000314"/>
    <property type="project" value="UniProtKB"/>
</dbReference>
<dbReference type="GO" id="GO:0060576">
    <property type="term" value="P:intestinal epithelial cell development"/>
    <property type="evidence" value="ECO:0000314"/>
    <property type="project" value="UniProtKB"/>
</dbReference>
<dbReference type="GO" id="GO:0060575">
    <property type="term" value="P:intestinal epithelial cell differentiation"/>
    <property type="evidence" value="ECO:0000314"/>
    <property type="project" value="MGI"/>
</dbReference>
<dbReference type="GO" id="GO:0030216">
    <property type="term" value="P:keratinocyte differentiation"/>
    <property type="evidence" value="ECO:0000315"/>
    <property type="project" value="MGI"/>
</dbReference>
<dbReference type="GO" id="GO:0048368">
    <property type="term" value="P:lateral mesoderm development"/>
    <property type="evidence" value="ECO:0000316"/>
    <property type="project" value="MGI"/>
</dbReference>
<dbReference type="GO" id="GO:0060487">
    <property type="term" value="P:lung epithelial cell differentiation"/>
    <property type="evidence" value="ECO:0000315"/>
    <property type="project" value="MGI"/>
</dbReference>
<dbReference type="GO" id="GO:1902018">
    <property type="term" value="P:negative regulation of cilium assembly"/>
    <property type="evidence" value="ECO:0000250"/>
    <property type="project" value="UniProtKB"/>
</dbReference>
<dbReference type="GO" id="GO:1904036">
    <property type="term" value="P:negative regulation of epithelial cell apoptotic process"/>
    <property type="evidence" value="ECO:0007669"/>
    <property type="project" value="Ensembl"/>
</dbReference>
<dbReference type="GO" id="GO:0030857">
    <property type="term" value="P:negative regulation of epithelial cell differentiation"/>
    <property type="evidence" value="ECO:0000314"/>
    <property type="project" value="MGI"/>
</dbReference>
<dbReference type="GO" id="GO:2001237">
    <property type="term" value="P:negative regulation of extrinsic apoptotic signaling pathway"/>
    <property type="evidence" value="ECO:0000316"/>
    <property type="project" value="MGI"/>
</dbReference>
<dbReference type="GO" id="GO:0045599">
    <property type="term" value="P:negative regulation of fat cell differentiation"/>
    <property type="evidence" value="ECO:0007669"/>
    <property type="project" value="Ensembl"/>
</dbReference>
<dbReference type="GO" id="GO:0010629">
    <property type="term" value="P:negative regulation of gene expression"/>
    <property type="evidence" value="ECO:0007669"/>
    <property type="project" value="Ensembl"/>
</dbReference>
<dbReference type="GO" id="GO:2000737">
    <property type="term" value="P:negative regulation of stem cell differentiation"/>
    <property type="evidence" value="ECO:0000314"/>
    <property type="project" value="MGI"/>
</dbReference>
<dbReference type="GO" id="GO:0000122">
    <property type="term" value="P:negative regulation of transcription by RNA polymerase II"/>
    <property type="evidence" value="ECO:0000250"/>
    <property type="project" value="UniProtKB"/>
</dbReference>
<dbReference type="GO" id="GO:0030903">
    <property type="term" value="P:notochord development"/>
    <property type="evidence" value="ECO:0000316"/>
    <property type="project" value="MGI"/>
</dbReference>
<dbReference type="GO" id="GO:0035265">
    <property type="term" value="P:organ growth"/>
    <property type="evidence" value="ECO:0000314"/>
    <property type="project" value="MGI"/>
</dbReference>
<dbReference type="GO" id="GO:0048339">
    <property type="term" value="P:paraxial mesoderm development"/>
    <property type="evidence" value="ECO:0000316"/>
    <property type="project" value="MGI"/>
</dbReference>
<dbReference type="GO" id="GO:0090263">
    <property type="term" value="P:positive regulation of canonical Wnt signaling pathway"/>
    <property type="evidence" value="ECO:0000314"/>
    <property type="project" value="MGI"/>
</dbReference>
<dbReference type="GO" id="GO:0060045">
    <property type="term" value="P:positive regulation of cardiac muscle cell proliferation"/>
    <property type="evidence" value="ECO:0000314"/>
    <property type="project" value="ARUK-UCL"/>
</dbReference>
<dbReference type="GO" id="GO:0030307">
    <property type="term" value="P:positive regulation of cell growth"/>
    <property type="evidence" value="ECO:0000266"/>
    <property type="project" value="ComplexPortal"/>
</dbReference>
<dbReference type="GO" id="GO:0008284">
    <property type="term" value="P:positive regulation of cell population proliferation"/>
    <property type="evidence" value="ECO:0000314"/>
    <property type="project" value="MGI"/>
</dbReference>
<dbReference type="GO" id="GO:0045893">
    <property type="term" value="P:positive regulation of DNA-templated transcription"/>
    <property type="evidence" value="ECO:0000315"/>
    <property type="project" value="MGI"/>
</dbReference>
<dbReference type="GO" id="GO:0050679">
    <property type="term" value="P:positive regulation of epithelial cell proliferation"/>
    <property type="evidence" value="ECO:0000314"/>
    <property type="project" value="MGI"/>
</dbReference>
<dbReference type="GO" id="GO:0010628">
    <property type="term" value="P:positive regulation of gene expression"/>
    <property type="evidence" value="ECO:0007669"/>
    <property type="project" value="Ensembl"/>
</dbReference>
<dbReference type="GO" id="GO:0045747">
    <property type="term" value="P:positive regulation of Notch signaling pathway"/>
    <property type="evidence" value="ECO:0000314"/>
    <property type="project" value="UniProtKB"/>
</dbReference>
<dbReference type="GO" id="GO:0046622">
    <property type="term" value="P:positive regulation of organ growth"/>
    <property type="evidence" value="ECO:0000314"/>
    <property type="project" value="MGI"/>
</dbReference>
<dbReference type="GO" id="GO:0045669">
    <property type="term" value="P:positive regulation of osteoblast differentiation"/>
    <property type="evidence" value="ECO:0007669"/>
    <property type="project" value="Ensembl"/>
</dbReference>
<dbReference type="GO" id="GO:1900182">
    <property type="term" value="P:positive regulation of protein localization to nucleus"/>
    <property type="evidence" value="ECO:0000315"/>
    <property type="project" value="UniProtKB"/>
</dbReference>
<dbReference type="GO" id="GO:1902459">
    <property type="term" value="P:positive regulation of stem cell population maintenance"/>
    <property type="evidence" value="ECO:0000315"/>
    <property type="project" value="MGI"/>
</dbReference>
<dbReference type="GO" id="GO:0045944">
    <property type="term" value="P:positive regulation of transcription by RNA polymerase II"/>
    <property type="evidence" value="ECO:0000314"/>
    <property type="project" value="ComplexPortal"/>
</dbReference>
<dbReference type="GO" id="GO:0065003">
    <property type="term" value="P:protein-containing complex assembly"/>
    <property type="evidence" value="ECO:0007669"/>
    <property type="project" value="Ensembl"/>
</dbReference>
<dbReference type="GO" id="GO:0060828">
    <property type="term" value="P:regulation of canonical Wnt signaling pathway"/>
    <property type="evidence" value="ECO:0000316"/>
    <property type="project" value="MGI"/>
</dbReference>
<dbReference type="GO" id="GO:0042127">
    <property type="term" value="P:regulation of cell population proliferation"/>
    <property type="evidence" value="ECO:0000316"/>
    <property type="project" value="MGI"/>
</dbReference>
<dbReference type="GO" id="GO:0010468">
    <property type="term" value="P:regulation of gene expression"/>
    <property type="evidence" value="ECO:0000316"/>
    <property type="project" value="MGI"/>
</dbReference>
<dbReference type="GO" id="GO:0010837">
    <property type="term" value="P:regulation of keratinocyte proliferation"/>
    <property type="evidence" value="ECO:0000315"/>
    <property type="project" value="MGI"/>
</dbReference>
<dbReference type="GO" id="GO:0072307">
    <property type="term" value="P:regulation of metanephric nephron tubule epithelial cell differentiation"/>
    <property type="evidence" value="ECO:0000316"/>
    <property type="project" value="MGI"/>
</dbReference>
<dbReference type="GO" id="GO:0050767">
    <property type="term" value="P:regulation of neurogenesis"/>
    <property type="evidence" value="ECO:0000266"/>
    <property type="project" value="MGI"/>
</dbReference>
<dbReference type="GO" id="GO:0072091">
    <property type="term" value="P:regulation of stem cell proliferation"/>
    <property type="evidence" value="ECO:0000314"/>
    <property type="project" value="MGI"/>
</dbReference>
<dbReference type="GO" id="GO:0032570">
    <property type="term" value="P:response to progesterone"/>
    <property type="evidence" value="ECO:0007669"/>
    <property type="project" value="Ensembl"/>
</dbReference>
<dbReference type="GO" id="GO:0042770">
    <property type="term" value="P:signal transduction in response to DNA damage"/>
    <property type="evidence" value="ECO:0000250"/>
    <property type="project" value="UniProtKB"/>
</dbReference>
<dbReference type="GO" id="GO:0035019">
    <property type="term" value="P:somatic stem cell population maintenance"/>
    <property type="evidence" value="ECO:0000314"/>
    <property type="project" value="MGI"/>
</dbReference>
<dbReference type="GO" id="GO:0001894">
    <property type="term" value="P:tissue homeostasis"/>
    <property type="evidence" value="ECO:0000315"/>
    <property type="project" value="ARUK-UCL"/>
</dbReference>
<dbReference type="GO" id="GO:0001829">
    <property type="term" value="P:trophectodermal cell differentiation"/>
    <property type="evidence" value="ECO:0000315"/>
    <property type="project" value="MGI"/>
</dbReference>
<dbReference type="GO" id="GO:0001570">
    <property type="term" value="P:vasculogenesis"/>
    <property type="evidence" value="ECO:0000315"/>
    <property type="project" value="MGI"/>
</dbReference>
<dbReference type="GO" id="GO:0042060">
    <property type="term" value="P:wound healing"/>
    <property type="evidence" value="ECO:0000315"/>
    <property type="project" value="ARUK-UCL"/>
</dbReference>
<dbReference type="CDD" id="cd00201">
    <property type="entry name" value="WW"/>
    <property type="match status" value="2"/>
</dbReference>
<dbReference type="DisProt" id="DP02451"/>
<dbReference type="FunFam" id="2.20.70.10:FF:000019">
    <property type="entry name" value="Putative transcriptional coactivator YAP1"/>
    <property type="match status" value="1"/>
</dbReference>
<dbReference type="FunFam" id="2.20.70.10:FF:000012">
    <property type="entry name" value="transcriptional coactivator YAP1 isoform X2"/>
    <property type="match status" value="1"/>
</dbReference>
<dbReference type="Gene3D" id="2.20.70.10">
    <property type="match status" value="2"/>
</dbReference>
<dbReference type="Gene3D" id="6.20.430.10">
    <property type="match status" value="1"/>
</dbReference>
<dbReference type="IDEAL" id="IID50281"/>
<dbReference type="InterPro" id="IPR053819">
    <property type="entry name" value="TEADIR3_omega_loop"/>
</dbReference>
<dbReference type="InterPro" id="IPR001202">
    <property type="entry name" value="WW_dom"/>
</dbReference>
<dbReference type="InterPro" id="IPR036020">
    <property type="entry name" value="WW_dom_sf"/>
</dbReference>
<dbReference type="InterPro" id="IPR051583">
    <property type="entry name" value="YAP1"/>
</dbReference>
<dbReference type="PANTHER" id="PTHR17616:SF9">
    <property type="entry name" value="TRANSCRIPTIONAL COACTIVATOR YAP1"/>
    <property type="match status" value="1"/>
</dbReference>
<dbReference type="PANTHER" id="PTHR17616">
    <property type="entry name" value="YES-ASSOCIATED PROTEIN YAP1 FAMILY MEMBER"/>
    <property type="match status" value="1"/>
</dbReference>
<dbReference type="Pfam" id="PF15238">
    <property type="entry name" value="TEADIR3"/>
    <property type="match status" value="1"/>
</dbReference>
<dbReference type="Pfam" id="PF00397">
    <property type="entry name" value="WW"/>
    <property type="match status" value="2"/>
</dbReference>
<dbReference type="SMART" id="SM00456">
    <property type="entry name" value="WW"/>
    <property type="match status" value="2"/>
</dbReference>
<dbReference type="SUPFAM" id="SSF51045">
    <property type="entry name" value="WW domain"/>
    <property type="match status" value="2"/>
</dbReference>
<dbReference type="PROSITE" id="PS01159">
    <property type="entry name" value="WW_DOMAIN_1"/>
    <property type="match status" value="2"/>
</dbReference>
<dbReference type="PROSITE" id="PS50020">
    <property type="entry name" value="WW_DOMAIN_2"/>
    <property type="match status" value="2"/>
</dbReference>
<proteinExistence type="evidence at protein level"/>
<name>YAP1_MOUSE</name>
<accession>P46938</accession>
<accession>Q52KJ5</accession>
<accession>Q91WL1</accession>
<comment type="function">
    <text evidence="3 11 15">Transcriptional regulator with dual roles as a coactivator and corepressor. Critical downstream regulatory target in the Hippo signaling pathway, crucial for organ size control and tumor suppression by restricting proliferation and promoting apoptosis (PubMed:29400695). The Hippo signaling pathway core involves a kinase cascade featuring STK3/MST2 and STK4/MST1, along with its regulatory partner SAV1, which phosphorylates and activates LATS1/2 in complex with their regulatory protein, MOB1. This activation leads to the phosphorylation and inactivation of the YAP1 oncoprotein and WWTR1/TAZ. Phosphorylation of YAP1 by LATS1/2 prevents its nuclear translocation, thereby regulating the expression of its target genes. The transcriptional regulation of gene expression requires TEAD transcription factors and modulates cell growth, anchorage-independent growth, and induction of epithelial-mesenchymal transition (EMT). Plays a key role in tissue tension and 3D tissue shape by regulating the cortical actomyosin network, acting via ARHGAP18, a Rho GTPase activating protein that suppresses F-actin polymerization. It also suppresses ciliogenesis by acting as a transcriptional corepressor of TEAD4 target genes AURKA and PLK1 (By similarity). In conjunction with WWTR1, regulates TGFB1-dependent SMAD2 and SMAD3 nuclear accumulation (PubMed:21145499). Synergizes with WBP2 to enhance PGR activity (By similarity).</text>
</comment>
<comment type="subunit">
    <text evidence="3 10 11 12 15 16 17">Part of a complex when phosphorylated that contains DSG3, PKP1, YAP1 and YWHAG; the complex is required for localization of DSG3 and YAP1 to the cell membrane in keratinocytes (By similarity). Binds to the SH3 domain of the YES kinase (By similarity). Binds to WBP1 and WBP2 (PubMed:7644498). Binds, in vitro, through the WW1 domain, to neural isoforms of ENAH that contain the PPSY motif (PubMed:9407065). The phosphorylated form interacts with YWHAB (By similarity). Interacts (via WW domains) with LATS1 (via PPxY motif 2) (By similarity). Interacts with LATS2 (By similarity). Interacts (via WW domain 1) with isoform JM-A of ERBB4 (via PPxY motif 2) (By similarity). Interacts with TEAD1, TEAD2 and TEAD3 (By similarity). Interacts with TP73 and HCK (By similarity). Interacts with RUNX1 (By similarity). Interacts with TEAD4 (PubMed:20123908). Interacts (via WW domains) with PTPN14 (via PPxY motif 2); this interaction leads to the cytoplasmic sequestration of YAP1 and inhibits its transcriptional coactivator activity (By similarity). Interacts (when phosphorylated at Ser-112) with SMAD2, SMAD3 and WWTR1 (PubMed:21145499). Interacts with PRRG2 (via cytoplasmic domain) (By similarity). Interacts (via WW domains) with PRRG4 (via cytoplasmic domain) (By similarity). Interacts (phosphorylated) with CLDN18; the interaction sequesters YAP1 away from the nucleus and thereby restricts transcription of YAP1 target genes (PubMed:29400695). Interacts with SMAD1 (By similarity). Interacts with AMOT; the interaction facilitates translocation of YAP1 to the cytoplasm and tight junctions (By similarity). Interacts with AMOTL2, the interaction is required for ubiquitination of AMOTL2 and localization of YAP1 to tight junctions (PubMed:21205866).</text>
</comment>
<comment type="interaction">
    <interactant intactId="EBI-1211949">
        <id>P46938</id>
    </interactant>
    <interactant intactId="EBI-911206">
        <id>Q501J6</id>
        <label>Ddx17</label>
    </interactant>
    <organismsDiffer>false</organismsDiffer>
    <experiments>3</experiments>
</comment>
<comment type="interaction">
    <interactant intactId="EBI-1211949">
        <id>P46938</id>
    </interactant>
    <interactant intactId="EBI-1175125">
        <id>P97474</id>
        <label>Pitx2</label>
    </interactant>
    <organismsDiffer>false</organismsDiffer>
    <experiments>2</experiments>
</comment>
<comment type="interaction">
    <interactant intactId="EBI-1211949">
        <id>P46938</id>
    </interactant>
    <interactant intactId="EBI-3953905">
        <id>P30051</id>
        <label>Tead1</label>
    </interactant>
    <organismsDiffer>false</organismsDiffer>
    <experiments>4</experiments>
</comment>
<comment type="interaction">
    <interactant intactId="EBI-1211949">
        <id>P46938</id>
    </interactant>
    <interactant intactId="EBI-1770138">
        <id>Q9JJP2</id>
        <label>Tp73</label>
    </interactant>
    <organismsDiffer>false</organismsDiffer>
    <experiments>2</experiments>
</comment>
<comment type="subcellular location">
    <subcellularLocation>
        <location evidence="15">Cytoplasm</location>
    </subcellularLocation>
    <subcellularLocation>
        <location evidence="11 14 15">Nucleus</location>
    </subcellularLocation>
    <subcellularLocation>
        <location evidence="15">Cell junction</location>
        <location evidence="15">Tight junction</location>
    </subcellularLocation>
    <subcellularLocation>
        <location evidence="3">Cell membrane</location>
    </subcellularLocation>
    <text evidence="2 3 11">Both phosphorylation and cell density can regulate its subcellular localization (By similarity). Phosphorylation sequesters it in the cytoplasm by inhibiting its translocation into the nucleus (By similarity). At low density, predominantly nuclear and is translocated to the cytoplasm at high density. PTPN14 induces translocation from the nucleus to the cytoplasm (By similarity). In the nucleus, phosphorylation by PRP4K induces nuclear exclusion (By similarity). Localized mainly to the nucleus in the early stages of embryo development with expression becoming evident in the cytoplasm at the blastocyst and epiblast stages (PubMed:21145499). Localizes to the cytoplasm and tight junctions following interaction with AMOT (By similarity). Localizes to tight junctions following interaction with AMOTL2 (By similarity). Translocates to the nucleus in the presence of SNAIL1 (By similarity). Found at the cell membrane in keratinocytes in response to mechanical strain (By similarity).</text>
</comment>
<comment type="alternative products">
    <event type="alternative splicing"/>
    <isoform>
        <id>P46938-1</id>
        <name>1</name>
        <name>YAP2L</name>
        <sequence type="displayed"/>
    </isoform>
    <isoform>
        <id>P46938-2</id>
        <name>2</name>
        <name>YAP2</name>
        <sequence type="described" ref="VSP_039056"/>
    </isoform>
    <text>Additional isoforms lacking the transactivation domain exist.</text>
</comment>
<comment type="tissue specificity">
    <text evidence="8 9 13">Isoforms lacking the transactivation domain seen in striatal neurons (at protein level). Ubiquitous. Isoform 2 is expressed at higher levels in the neural tissues. In the embryo, it is expressed in brain, eye, and the maxillary and frontonasal components of the primary palate.</text>
</comment>
<comment type="domain">
    <text evidence="3">The first coiled-coil region mediates most of the interaction with TEAD transcription factors.</text>
</comment>
<comment type="PTM">
    <text evidence="3">Phosphorylated by LATS1 and LATS2; leading to cytoplasmic translocation and inactivation. Phosphorylated by ABL1; leading to YAP1 stabilization, enhanced interaction with TP73 and recruitment onto proapoptotic genes; in response to DNA damage. Phosphorylation at Ser-385 and Ser-388 by CK1 is triggered by previous phosphorylation at Ser-382 by LATS proteins and leads to YAP1 ubiquitination by SCF(beta-TRCP) E3 ubiquitin ligase and subsequent degradation (By similarity). Phosphorylated at Thr-104, Ser-123, Ser-352 and Thr-397 by MAPK8/JNK1 and MAPK9/JNK2, which is required for the regulation of apoptosis by YAP1 (By similarity).</text>
</comment>
<comment type="PTM">
    <text evidence="3">Lactylation by AARS1 promotes nuclear localization and stabilization of YAP1, leading to increased Hippo signaling pathway. Delactylated by SIRT1.</text>
</comment>
<comment type="PTM">
    <text evidence="3">Ubiquitinated by SCF(beta-TRCP) E3 ubiquitin ligase.</text>
</comment>
<comment type="similarity">
    <text evidence="21">Belongs to the YAP1 family.</text>
</comment>
<evidence type="ECO:0000250" key="1"/>
<evidence type="ECO:0000250" key="2">
    <source>
        <dbReference type="UniProtKB" id="A0A8C0NGY6"/>
    </source>
</evidence>
<evidence type="ECO:0000250" key="3">
    <source>
        <dbReference type="UniProtKB" id="P46937"/>
    </source>
</evidence>
<evidence type="ECO:0000250" key="4">
    <source>
        <dbReference type="UniProtKB" id="Q2EJA0"/>
    </source>
</evidence>
<evidence type="ECO:0000255" key="5"/>
<evidence type="ECO:0000255" key="6">
    <source>
        <dbReference type="PROSITE-ProRule" id="PRU00224"/>
    </source>
</evidence>
<evidence type="ECO:0000256" key="7">
    <source>
        <dbReference type="SAM" id="MobiDB-lite"/>
    </source>
</evidence>
<evidence type="ECO:0000269" key="8">
    <source>
    </source>
</evidence>
<evidence type="ECO:0000269" key="9">
    <source>
    </source>
</evidence>
<evidence type="ECO:0000269" key="10">
    <source>
    </source>
</evidence>
<evidence type="ECO:0000269" key="11">
    <source>
    </source>
</evidence>
<evidence type="ECO:0000269" key="12">
    <source>
    </source>
</evidence>
<evidence type="ECO:0000269" key="13">
    <source>
    </source>
</evidence>
<evidence type="ECO:0000269" key="14">
    <source>
    </source>
</evidence>
<evidence type="ECO:0000269" key="15">
    <source>
    </source>
</evidence>
<evidence type="ECO:0000269" key="16">
    <source>
    </source>
</evidence>
<evidence type="ECO:0000269" key="17">
    <source>
    </source>
</evidence>
<evidence type="ECO:0000303" key="18">
    <source>
    </source>
</evidence>
<evidence type="ECO:0000303" key="19">
    <source>
    </source>
</evidence>
<evidence type="ECO:0000303" key="20">
    <source>
    </source>
</evidence>
<evidence type="ECO:0000305" key="21"/>
<evidence type="ECO:0007744" key="22">
    <source>
    </source>
</evidence>
<evidence type="ECO:0007744" key="23">
    <source>
    </source>
</evidence>
<evidence type="ECO:0007744" key="24">
    <source>
    </source>
</evidence>
<evidence type="ECO:0007829" key="25">
    <source>
        <dbReference type="PDB" id="3JUA"/>
    </source>
</evidence>
<evidence type="ECO:0007829" key="26">
    <source>
        <dbReference type="PDB" id="6JK0"/>
    </source>
</evidence>
<evidence type="ECO:0007829" key="27">
    <source>
        <dbReference type="PDB" id="6JK1"/>
    </source>
</evidence>
<organism>
    <name type="scientific">Mus musculus</name>
    <name type="common">Mouse</name>
    <dbReference type="NCBI Taxonomy" id="10090"/>
    <lineage>
        <taxon>Eukaryota</taxon>
        <taxon>Metazoa</taxon>
        <taxon>Chordata</taxon>
        <taxon>Craniata</taxon>
        <taxon>Vertebrata</taxon>
        <taxon>Euteleostomi</taxon>
        <taxon>Mammalia</taxon>
        <taxon>Eutheria</taxon>
        <taxon>Euarchontoglires</taxon>
        <taxon>Glires</taxon>
        <taxon>Rodentia</taxon>
        <taxon>Myomorpha</taxon>
        <taxon>Muroidea</taxon>
        <taxon>Muridae</taxon>
        <taxon>Murinae</taxon>
        <taxon>Mus</taxon>
        <taxon>Mus</taxon>
    </lineage>
</organism>
<protein>
    <recommendedName>
        <fullName>Transcriptional coactivator YAP1</fullName>
        <shortName>Yes-associated protein 1</shortName>
    </recommendedName>
    <alternativeName>
        <fullName>Protein yorkie homolog</fullName>
    </alternativeName>
    <alternativeName>
        <fullName>Yes-associated protein YAP65 homolog</fullName>
    </alternativeName>
</protein>
<keyword id="KW-0002">3D-structure</keyword>
<keyword id="KW-0010">Activator</keyword>
<keyword id="KW-0025">Alternative splicing</keyword>
<keyword id="KW-0965">Cell junction</keyword>
<keyword id="KW-1003">Cell membrane</keyword>
<keyword id="KW-0175">Coiled coil</keyword>
<keyword id="KW-0963">Cytoplasm</keyword>
<keyword id="KW-0472">Membrane</keyword>
<keyword id="KW-0539">Nucleus</keyword>
<keyword id="KW-0597">Phosphoprotein</keyword>
<keyword id="KW-0656">Proto-oncogene</keyword>
<keyword id="KW-1185">Reference proteome</keyword>
<keyword id="KW-0677">Repeat</keyword>
<keyword id="KW-0678">Repressor</keyword>
<keyword id="KW-0796">Tight junction</keyword>
<keyword id="KW-0804">Transcription</keyword>
<keyword id="KW-0805">Transcription regulation</keyword>
<keyword id="KW-0832">Ubl conjugation</keyword>
<feature type="chain" id="PRO_0000076072" description="Transcriptional coactivator YAP1">
    <location>
        <begin position="1"/>
        <end position="488"/>
    </location>
</feature>
<feature type="domain" description="WW 1" evidence="6">
    <location>
        <begin position="156"/>
        <end position="189"/>
    </location>
</feature>
<feature type="domain" description="WW 2" evidence="6">
    <location>
        <begin position="215"/>
        <end position="248"/>
    </location>
</feature>
<feature type="region of interest" description="Disordered" evidence="7">
    <location>
        <begin position="1"/>
        <end position="47"/>
    </location>
</feature>
<feature type="region of interest" description="Disordered" evidence="7">
    <location>
        <begin position="76"/>
        <end position="99"/>
    </location>
</feature>
<feature type="region of interest" description="Disordered" evidence="7">
    <location>
        <begin position="261"/>
        <end position="293"/>
    </location>
</feature>
<feature type="region of interest" description="Transactivation domain">
    <location>
        <begin position="276"/>
        <end position="488"/>
    </location>
</feature>
<feature type="region of interest" description="Disordered" evidence="7">
    <location>
        <begin position="339"/>
        <end position="393"/>
    </location>
</feature>
<feature type="coiled-coil region" evidence="1">
    <location>
        <begin position="71"/>
        <end position="85"/>
    </location>
</feature>
<feature type="coiled-coil region" evidence="5">
    <location>
        <begin position="283"/>
        <end position="344"/>
    </location>
</feature>
<feature type="compositionally biased region" description="Pro residues" evidence="7">
    <location>
        <begin position="1"/>
        <end position="21"/>
    </location>
</feature>
<feature type="compositionally biased region" description="Polar residues" evidence="7">
    <location>
        <begin position="348"/>
        <end position="376"/>
    </location>
</feature>
<feature type="compositionally biased region" description="Polar residues" evidence="7">
    <location>
        <begin position="384"/>
        <end position="393"/>
    </location>
</feature>
<feature type="modified residue" description="Phosphoserine" evidence="24">
    <location>
        <position position="46"/>
    </location>
</feature>
<feature type="modified residue" description="Phosphothreonine" evidence="3">
    <location>
        <position position="48"/>
    </location>
</feature>
<feature type="modified residue" description="N6-lactoyllysine" evidence="3">
    <location>
        <position position="75"/>
    </location>
</feature>
<feature type="modified residue" description="Phosphoserine" evidence="4">
    <location>
        <position position="90"/>
    </location>
</feature>
<feature type="modified residue" description="Phosphoserine" evidence="23 24">
    <location>
        <position position="94"/>
    </location>
</feature>
<feature type="modified residue" description="Phosphothreonine" evidence="4">
    <location>
        <position position="95"/>
    </location>
</feature>
<feature type="modified residue" description="Phosphothreonine; by MAPK8 and MAPK9" evidence="3">
    <location>
        <position position="104"/>
    </location>
</feature>
<feature type="modified residue" description="Phosphoserine" evidence="11 24">
    <location>
        <position position="112"/>
    </location>
</feature>
<feature type="modified residue" description="Phosphoserine" evidence="3">
    <location>
        <position position="113"/>
    </location>
</feature>
<feature type="modified residue" description="Phosphoserine" evidence="3">
    <location>
        <position position="116"/>
    </location>
</feature>
<feature type="modified residue" description="Phosphoserine" evidence="24">
    <location>
        <position position="123"/>
    </location>
</feature>
<feature type="modified residue" description="Phosphoserine; by LATS1 and LATS2" evidence="3">
    <location>
        <position position="149"/>
    </location>
</feature>
<feature type="modified residue" description="Phosphoserine" evidence="3">
    <location>
        <position position="274"/>
    </location>
</feature>
<feature type="modified residue" description="Phosphoserine; by MAPK8 and MAPK9" evidence="3">
    <location>
        <position position="352"/>
    </location>
</feature>
<feature type="modified residue" description="Phosphoserine" evidence="22">
    <location>
        <position position="356"/>
    </location>
</feature>
<feature type="modified residue" description="Phosphoserine" evidence="3">
    <location>
        <position position="366"/>
    </location>
</feature>
<feature type="modified residue" description="Phosphoserine" evidence="24">
    <location>
        <position position="367"/>
    </location>
</feature>
<feature type="modified residue" description="Phosphoserine" evidence="3">
    <location>
        <position position="373"/>
    </location>
</feature>
<feature type="modified residue" description="Phosphoserine; by LATS1 and LATS2" evidence="3">
    <location>
        <position position="382"/>
    </location>
</feature>
<feature type="modified residue" description="Phosphoserine; by CK1" evidence="3">
    <location>
        <position position="385"/>
    </location>
</feature>
<feature type="modified residue" description="Phosphoserine; by CK1" evidence="3">
    <location>
        <position position="388"/>
    </location>
</feature>
<feature type="modified residue" description="Phosphotyrosine; by ABL1" evidence="3">
    <location>
        <position position="392"/>
    </location>
</feature>
<feature type="modified residue" description="Phosphothreonine; by MAPK8 and MAPK9" evidence="3">
    <location>
        <position position="397"/>
    </location>
</feature>
<feature type="splice variant" id="VSP_039056" description="In isoform 2." evidence="18 19 20">
    <location>
        <begin position="313"/>
        <end position="328"/>
    </location>
</feature>
<feature type="helix" evidence="25">
    <location>
        <begin position="51"/>
        <end position="58"/>
    </location>
</feature>
<feature type="strand" evidence="25">
    <location>
        <begin position="61"/>
        <end position="63"/>
    </location>
</feature>
<feature type="helix" evidence="25">
    <location>
        <begin position="71"/>
        <end position="73"/>
    </location>
</feature>
<feature type="helix" evidence="25">
    <location>
        <begin position="79"/>
        <end position="81"/>
    </location>
</feature>
<feature type="strand" evidence="27">
    <location>
        <begin position="162"/>
        <end position="166"/>
    </location>
</feature>
<feature type="strand" evidence="27">
    <location>
        <begin position="172"/>
        <end position="176"/>
    </location>
</feature>
<feature type="turn" evidence="27">
    <location>
        <begin position="177"/>
        <end position="180"/>
    </location>
</feature>
<feature type="strand" evidence="27">
    <location>
        <begin position="181"/>
        <end position="185"/>
    </location>
</feature>
<feature type="strand" evidence="26">
    <location>
        <begin position="191"/>
        <end position="194"/>
    </location>
</feature>
<feature type="strand" evidence="27">
    <location>
        <begin position="221"/>
        <end position="225"/>
    </location>
</feature>
<feature type="strand" evidence="27">
    <location>
        <begin position="231"/>
        <end position="235"/>
    </location>
</feature>
<feature type="turn" evidence="27">
    <location>
        <begin position="236"/>
        <end position="239"/>
    </location>
</feature>
<feature type="strand" evidence="27">
    <location>
        <begin position="240"/>
        <end position="244"/>
    </location>
</feature>
<sequence>MEPAQQPPPQPAPQGPAPPSVSPAGTPAAPPAPPAGHQVVHVRGDSETDLEALFNAVMNPKTANVPQTVPMRLRKLPDSFFKPPEPKSHSRQASTDAGTAGALTPQHVRAHSSPASLQLGAVSPGTLTASGVVSGPAAAPAAQHLRQSSFEIPDDVPLPAGWEMAKTSSGQRYFLNHNDQTTTWQDPRKAMLSQLNVPAPASPAVPQTLMNSASGPLPDGWEQAMTQDGEVYYINHKNKTTSWLDPRLDPRFAMNQRITQSAPVKQPPPLAPQSPQGGVLGGGSSNQQQQIQLQQLQMEKERLRLKQQELFRQAIRNINPSTANAPKCQELALRSQLPTLEQDGGTPNAVSSPGMSQELRTMTTNSSDPFLNSGTYHSRDESTDSGLSMSSYSIPRTPDDFLNSVDEMDTGDTISQSTLPSQQSRFPDYLEALPGTNVDLGTLEGDAMNIEGEELMPSLQEALSSEILDVESVLAATKLDKESFLTWL</sequence>
<reference key="1">
    <citation type="journal article" date="1995" name="J. Biol. Chem.">
        <title>Characterization of the mammalian YAP (Yes-associated protein) gene and its role in defining a novel protein module, the WW domain.</title>
        <authorList>
            <person name="Sudol M."/>
            <person name="Bork P."/>
            <person name="Einbond A."/>
            <person name="Kastury K."/>
            <person name="Druck T."/>
            <person name="Negrini M."/>
            <person name="Huebner K."/>
            <person name="Lehman D."/>
        </authorList>
    </citation>
    <scope>NUCLEOTIDE SEQUENCE [MRNA] (ISOFORM 2)</scope>
    <source>
        <strain>NIH Swiss</strain>
        <tissue>Embryo</tissue>
    </source>
</reference>
<reference key="2">
    <citation type="journal article" date="2003" name="J. Biol. Chem.">
        <title>WW domain-containing protein YAP associates with ErbB-4 and acts as a co-transcriptional activator for the carboxyl-terminal fragment of ErbB-4 that translocates to the nucleus.</title>
        <authorList>
            <person name="Komuro A."/>
            <person name="Nagai M."/>
            <person name="Navin N.E."/>
            <person name="Sudol M."/>
        </authorList>
    </citation>
    <scope>NUCLEOTIDE SEQUENCE [MRNA] (ISOFORMS 1 AND 2)</scope>
    <scope>TISSUE SPECIFICITY</scope>
</reference>
<reference key="3">
    <citation type="submission" date="2005-07" db="EMBL/GenBank/DDBJ databases">
        <authorList>
            <person name="Mural R.J."/>
            <person name="Adams M.D."/>
            <person name="Myers E.W."/>
            <person name="Smith H.O."/>
            <person name="Venter J.C."/>
        </authorList>
    </citation>
    <scope>NUCLEOTIDE SEQUENCE [LARGE SCALE GENOMIC DNA]</scope>
</reference>
<reference key="4">
    <citation type="journal article" date="2004" name="Genome Res.">
        <title>The status, quality, and expansion of the NIH full-length cDNA project: the Mammalian Gene Collection (MGC).</title>
        <authorList>
            <consortium name="The MGC Project Team"/>
        </authorList>
    </citation>
    <scope>NUCLEOTIDE SEQUENCE [LARGE SCALE MRNA] (ISOFORM 2)</scope>
    <source>
        <strain>129</strain>
        <strain>C57BL/6J</strain>
        <strain>FVB/N</strain>
        <tissue>Brain</tissue>
        <tissue>Kidney</tissue>
        <tissue>Mammary gland</tissue>
    </source>
</reference>
<reference key="5">
    <citation type="journal article" date="1995" name="Proc. Natl. Acad. Sci. U.S.A.">
        <title>The WW domain of Yes-associated protein binds a proline-rich ligand that differs from the consensus established for Src homology 3-binding modules.</title>
        <authorList>
            <person name="Chen H.I."/>
            <person name="Sudol M."/>
        </authorList>
    </citation>
    <scope>INTERACTION WITH WBP1 AND WBP2</scope>
</reference>
<reference key="6">
    <citation type="journal article" date="1997" name="J. Biol. Chem.">
        <title>The WW domain of neural protein FE65 interacts with proline-rich motifs in Mena, the mammalian homolog of Drosophila enabled.</title>
        <authorList>
            <person name="Ermekova K.S."/>
            <person name="Zambrano N."/>
            <person name="Linn H."/>
            <person name="Minopoli G."/>
            <person name="Gertler F."/>
            <person name="Russo T."/>
            <person name="Sudol M."/>
        </authorList>
    </citation>
    <scope>INTERACTION WITH ENAH</scope>
</reference>
<reference key="7">
    <citation type="journal article" date="2004" name="Mol. Cell. Proteomics">
        <title>Phosphoproteomic analysis of the developing mouse brain.</title>
        <authorList>
            <person name="Ballif B.A."/>
            <person name="Villen J."/>
            <person name="Beausoleil S.A."/>
            <person name="Schwartz D."/>
            <person name="Gygi S.P."/>
        </authorList>
    </citation>
    <scope>IDENTIFICATION BY MASS SPECTROMETRY [LARGE SCALE ANALYSIS]</scope>
    <source>
        <tissue>Embryonic brain</tissue>
    </source>
</reference>
<reference key="8">
    <citation type="journal article" date="2006" name="J. Cell Biol.">
        <title>Transcriptional repression induces a slowly progressive atypical neuronal death associated with changes of YAP isoforms and p73.</title>
        <authorList>
            <person name="Hoshino M."/>
            <person name="Qi M.-L."/>
            <person name="Yoshimura N."/>
            <person name="Tagawa K."/>
            <person name="Wada Y.-I."/>
            <person name="Enokido Y."/>
            <person name="Marubuchi S."/>
            <person name="Harjes P."/>
            <person name="Arai N."/>
            <person name="Oyanagi K."/>
            <person name="Blandino G."/>
            <person name="Sudol M."/>
            <person name="Rich T."/>
            <person name="Kanazawa I."/>
            <person name="Wanker E.E."/>
            <person name="Saitoe M."/>
            <person name="Okazawa H."/>
        </authorList>
    </citation>
    <scope>IDENTIFICATION OF ISOFORMS LACKING THE TRANSCRIPTIONAL ACTIVATION DOMAIN</scope>
    <scope>TISSUE SPECIFICITY</scope>
</reference>
<reference key="9">
    <citation type="journal article" date="2007" name="Proc. Natl. Acad. Sci. U.S.A.">
        <title>Large-scale phosphorylation analysis of mouse liver.</title>
        <authorList>
            <person name="Villen J."/>
            <person name="Beausoleil S.A."/>
            <person name="Gerber S.A."/>
            <person name="Gygi S.P."/>
        </authorList>
    </citation>
    <scope>IDENTIFICATION BY MASS SPECTROMETRY [LARGE SCALE ANALYSIS]</scope>
    <source>
        <tissue>Liver</tissue>
    </source>
</reference>
<reference key="10">
    <citation type="journal article" date="2007" name="Science">
        <title>ATM and ATR substrate analysis reveals extensive protein networks responsive to DNA damage.</title>
        <authorList>
            <person name="Matsuoka S."/>
            <person name="Ballif B.A."/>
            <person name="Smogorzewska A."/>
            <person name="McDonald E.R. III"/>
            <person name="Hurov K.E."/>
            <person name="Luo J."/>
            <person name="Bakalarski C.E."/>
            <person name="Zhao Z."/>
            <person name="Solimini N."/>
            <person name="Lerenthal Y."/>
            <person name="Shiloh Y."/>
            <person name="Gygi S.P."/>
            <person name="Elledge S.J."/>
        </authorList>
    </citation>
    <scope>PHOSPHORYLATION [LARGE SCALE ANALYSIS] AT SER-356</scope>
    <scope>IDENTIFICATION BY MASS SPECTROMETRY [LARGE SCALE ANALYSIS]</scope>
    <source>
        <tissue>Embryonic fibroblast</tissue>
    </source>
</reference>
<reference key="11">
    <citation type="journal article" date="2009" name="Mol. Cell. Proteomics">
        <title>Large scale localization of protein phosphorylation by use of electron capture dissociation mass spectrometry.</title>
        <authorList>
            <person name="Sweet S.M."/>
            <person name="Bailey C.M."/>
            <person name="Cunningham D.L."/>
            <person name="Heath J.K."/>
            <person name="Cooper H.J."/>
        </authorList>
    </citation>
    <scope>PHOSPHORYLATION [LARGE SCALE ANALYSIS] AT SER-94</scope>
    <scope>IDENTIFICATION BY MASS SPECTROMETRY [LARGE SCALE ANALYSIS]</scope>
    <source>
        <tissue>Embryonic fibroblast</tissue>
    </source>
</reference>
<reference key="12">
    <citation type="journal article" date="2010" name="Cell">
        <title>A tissue-specific atlas of mouse protein phosphorylation and expression.</title>
        <authorList>
            <person name="Huttlin E.L."/>
            <person name="Jedrychowski M.P."/>
            <person name="Elias J.E."/>
            <person name="Goswami T."/>
            <person name="Rad R."/>
            <person name="Beausoleil S.A."/>
            <person name="Villen J."/>
            <person name="Haas W."/>
            <person name="Sowa M.E."/>
            <person name="Gygi S.P."/>
        </authorList>
    </citation>
    <scope>PHOSPHORYLATION [LARGE SCALE ANALYSIS] AT SER-46; SER-94; SER-112; SER-123 AND SER-367</scope>
    <scope>IDENTIFICATION BY MASS SPECTROMETRY [LARGE SCALE ANALYSIS]</scope>
    <source>
        <tissue>Brain</tissue>
        <tissue>Brown adipose tissue</tissue>
        <tissue>Heart</tissue>
        <tissue>Kidney</tissue>
        <tissue>Liver</tissue>
        <tissue>Lung</tissue>
        <tissue>Pancreas</tissue>
        <tissue>Spleen</tissue>
        <tissue>Testis</tissue>
    </source>
</reference>
<reference key="13">
    <citation type="journal article" date="2010" name="Dev. Cell">
        <title>The Crumbs complex couples cell density sensing to Hippo-dependent control of the TGF-beta-SMAD pathway.</title>
        <authorList>
            <person name="Varelas X."/>
            <person name="Samavarchi-Tehrani P."/>
            <person name="Narimatsu M."/>
            <person name="Weiss A."/>
            <person name="Cockburn K."/>
            <person name="Larsen B.G."/>
            <person name="Rossant J."/>
            <person name="Wrana J.L."/>
        </authorList>
    </citation>
    <scope>FUNCTION</scope>
    <scope>INTERACTION WITH WWTR1; SMAD2 AND SMAD3</scope>
    <scope>SUBCELLULAR LOCATION</scope>
</reference>
<reference key="14">
    <citation type="journal article" date="2010" name="Genes Dev.">
        <title>Structural basis of YAP recognition by TEAD4 in the hippo pathway.</title>
        <authorList>
            <person name="Chen L."/>
            <person name="Chan S.W."/>
            <person name="Zhang X."/>
            <person name="Walsh M."/>
            <person name="Lim C.J."/>
            <person name="Hong W."/>
            <person name="Song H."/>
        </authorList>
    </citation>
    <scope>INTERACTION WITH TEAD4</scope>
    <scope>X-RAY CRYSTALLOGRAPHY (3.0 ANGSTROMS) OF 47-85 IN COMPLEX WITH TEAD4</scope>
</reference>
<reference key="15">
    <citation type="journal article" date="2011" name="Genes Dev.">
        <title>Angiomotin is a novel Hippo pathway component that inhibits YAP oncoprotein.</title>
        <authorList>
            <person name="Zhao B."/>
            <person name="Li L."/>
            <person name="Lu Q."/>
            <person name="Wang L.H."/>
            <person name="Liu C.Y."/>
            <person name="Lei Q."/>
            <person name="Guan K.L."/>
        </authorList>
    </citation>
    <scope>INTERACTION WITH AMOTL2</scope>
</reference>
<reference key="16">
    <citation type="journal article" date="2014" name="Am. J. Hum. Genet.">
        <title>Heterozygous loss-of-function mutations in YAP1 cause both isolated and syndromic optic fissure closure defects.</title>
        <authorList>
            <consortium name="UK10K Consortium"/>
            <person name="Williamson K.A."/>
            <person name="Rainger J."/>
            <person name="Floyd J.A."/>
            <person name="Ansari M."/>
            <person name="Meynert A."/>
            <person name="Aldridge K.V."/>
            <person name="Rainger J.K."/>
            <person name="Anderson C.A."/>
            <person name="Moore A.T."/>
            <person name="Hurles M.E."/>
            <person name="Clarke A."/>
            <person name="van Heyningen V."/>
            <person name="Verloes A."/>
            <person name="Taylor M.S."/>
            <person name="Wilkie A.O."/>
            <person name="Fitzpatrick D.R."/>
            <person name="Hurles M."/>
            <person name="FitzPatrick D.R."/>
            <person name="Al-Turki S."/>
            <person name="Anderson C."/>
            <person name="Barroso I."/>
            <person name="Beales P."/>
            <person name="Bentham J."/>
            <person name="Bhattacharya S."/>
            <person name="Carss K."/>
            <person name="Chatterjee K."/>
            <person name="Cirak S."/>
            <person name="Cosgrove C."/>
            <person name="Daly A."/>
            <person name="Floyd J."/>
            <person name="Franklin C."/>
            <person name="Futema M."/>
            <person name="Humphries S."/>
            <person name="McCarthy S."/>
            <person name="Mitchison H."/>
            <person name="Muntoni F."/>
            <person name="Onoufriadis A."/>
            <person name="Parker V."/>
            <person name="Payne F."/>
            <person name="Plagnol V."/>
            <person name="Raymond L."/>
            <person name="Savage D."/>
            <person name="Scambler P."/>
            <person name="Schmidts M."/>
            <person name="Semple R."/>
            <person name="Serra E."/>
            <person name="Stalker J."/>
            <person name="van Kogelenberg M."/>
            <person name="Vijayarangakannan P."/>
            <person name="Walter K."/>
            <person name="Wood G."/>
        </authorList>
    </citation>
    <scope>TISSUE SPECIFICITY</scope>
</reference>
<reference key="17">
    <citation type="journal article" date="2016" name="Genes Dev.">
        <title>DLG5 connects cell polarity and Hippo signaling protein networks by linking PAR-1 with MST1/2.</title>
        <authorList>
            <person name="Kwan J."/>
            <person name="Sczaniecka A."/>
            <person name="Arash E.H."/>
            <person name="Nguyen L."/>
            <person name="Chen C.C."/>
            <person name="Ratkovic S."/>
            <person name="Klezovitch O."/>
            <person name="Attisano L."/>
            <person name="McNeill H."/>
            <person name="Emili A."/>
            <person name="Vasioukhin V."/>
        </authorList>
    </citation>
    <scope>SUBCELLULAR LOCATION</scope>
</reference>
<reference key="18">
    <citation type="journal article" date="2018" name="J. Clin. Invest.">
        <title>Claudin-18-mediated YAP activity regulates lung stem and progenitor cell homeostasis and tumorigenesis.</title>
        <authorList>
            <person name="Zhou B."/>
            <person name="Flodby P."/>
            <person name="Luo J."/>
            <person name="Castillo D.R."/>
            <person name="Liu Y."/>
            <person name="Yu F.X."/>
            <person name="McConnell A."/>
            <person name="Varghese B."/>
            <person name="Li G."/>
            <person name="Chimge N.O."/>
            <person name="Sunohara M."/>
            <person name="Koss M.N."/>
            <person name="Elatre W."/>
            <person name="Conti P."/>
            <person name="Liebler J.M."/>
            <person name="Yang C."/>
            <person name="Marconett C.N."/>
            <person name="Laird-Offringa I.A."/>
            <person name="Minoo P."/>
            <person name="Guan K."/>
            <person name="Stripp B.R."/>
            <person name="Crandall E.D."/>
            <person name="Borok Z."/>
        </authorList>
    </citation>
    <scope>FUNCTION</scope>
    <scope>INTERACTION WITH CLDN18</scope>
    <scope>SUBCELLULAR LOCATION</scope>
</reference>